<dbReference type="EC" id="5.3.1.1" evidence="1"/>
<dbReference type="EMBL" id="AE015927">
    <property type="protein sequence ID" value="AAO35017.1"/>
    <property type="molecule type" value="Genomic_DNA"/>
</dbReference>
<dbReference type="SMR" id="Q898R2"/>
<dbReference type="STRING" id="212717.CTC_00380"/>
<dbReference type="KEGG" id="ctc:CTC_00380"/>
<dbReference type="HOGENOM" id="CLU_024251_2_3_9"/>
<dbReference type="UniPathway" id="UPA00109">
    <property type="reaction ID" value="UER00189"/>
</dbReference>
<dbReference type="UniPathway" id="UPA00138"/>
<dbReference type="Proteomes" id="UP000001412">
    <property type="component" value="Chromosome"/>
</dbReference>
<dbReference type="GO" id="GO:0005829">
    <property type="term" value="C:cytosol"/>
    <property type="evidence" value="ECO:0007669"/>
    <property type="project" value="TreeGrafter"/>
</dbReference>
<dbReference type="GO" id="GO:0004807">
    <property type="term" value="F:triose-phosphate isomerase activity"/>
    <property type="evidence" value="ECO:0007669"/>
    <property type="project" value="UniProtKB-UniRule"/>
</dbReference>
<dbReference type="GO" id="GO:0006094">
    <property type="term" value="P:gluconeogenesis"/>
    <property type="evidence" value="ECO:0007669"/>
    <property type="project" value="UniProtKB-UniRule"/>
</dbReference>
<dbReference type="GO" id="GO:0046166">
    <property type="term" value="P:glyceraldehyde-3-phosphate biosynthetic process"/>
    <property type="evidence" value="ECO:0007669"/>
    <property type="project" value="TreeGrafter"/>
</dbReference>
<dbReference type="GO" id="GO:0019563">
    <property type="term" value="P:glycerol catabolic process"/>
    <property type="evidence" value="ECO:0007669"/>
    <property type="project" value="TreeGrafter"/>
</dbReference>
<dbReference type="GO" id="GO:0006096">
    <property type="term" value="P:glycolytic process"/>
    <property type="evidence" value="ECO:0007669"/>
    <property type="project" value="UniProtKB-UniRule"/>
</dbReference>
<dbReference type="CDD" id="cd00311">
    <property type="entry name" value="TIM"/>
    <property type="match status" value="1"/>
</dbReference>
<dbReference type="FunFam" id="3.20.20.70:FF:000016">
    <property type="entry name" value="Triosephosphate isomerase"/>
    <property type="match status" value="1"/>
</dbReference>
<dbReference type="Gene3D" id="3.20.20.70">
    <property type="entry name" value="Aldolase class I"/>
    <property type="match status" value="1"/>
</dbReference>
<dbReference type="HAMAP" id="MF_00147_B">
    <property type="entry name" value="TIM_B"/>
    <property type="match status" value="1"/>
</dbReference>
<dbReference type="InterPro" id="IPR013785">
    <property type="entry name" value="Aldolase_TIM"/>
</dbReference>
<dbReference type="InterPro" id="IPR035990">
    <property type="entry name" value="TIM_sf"/>
</dbReference>
<dbReference type="InterPro" id="IPR022896">
    <property type="entry name" value="TrioseP_Isoase_bac/euk"/>
</dbReference>
<dbReference type="InterPro" id="IPR000652">
    <property type="entry name" value="Triosephosphate_isomerase"/>
</dbReference>
<dbReference type="InterPro" id="IPR020861">
    <property type="entry name" value="Triosephosphate_isomerase_AS"/>
</dbReference>
<dbReference type="NCBIfam" id="TIGR00419">
    <property type="entry name" value="tim"/>
    <property type="match status" value="1"/>
</dbReference>
<dbReference type="PANTHER" id="PTHR21139">
    <property type="entry name" value="TRIOSEPHOSPHATE ISOMERASE"/>
    <property type="match status" value="1"/>
</dbReference>
<dbReference type="PANTHER" id="PTHR21139:SF42">
    <property type="entry name" value="TRIOSEPHOSPHATE ISOMERASE"/>
    <property type="match status" value="1"/>
</dbReference>
<dbReference type="Pfam" id="PF00121">
    <property type="entry name" value="TIM"/>
    <property type="match status" value="1"/>
</dbReference>
<dbReference type="SUPFAM" id="SSF51351">
    <property type="entry name" value="Triosephosphate isomerase (TIM)"/>
    <property type="match status" value="1"/>
</dbReference>
<dbReference type="PROSITE" id="PS00171">
    <property type="entry name" value="TIM_1"/>
    <property type="match status" value="1"/>
</dbReference>
<dbReference type="PROSITE" id="PS51440">
    <property type="entry name" value="TIM_2"/>
    <property type="match status" value="1"/>
</dbReference>
<name>TPIS_CLOTE</name>
<proteinExistence type="inferred from homology"/>
<organism>
    <name type="scientific">Clostridium tetani (strain Massachusetts / E88)</name>
    <dbReference type="NCBI Taxonomy" id="212717"/>
    <lineage>
        <taxon>Bacteria</taxon>
        <taxon>Bacillati</taxon>
        <taxon>Bacillota</taxon>
        <taxon>Clostridia</taxon>
        <taxon>Eubacteriales</taxon>
        <taxon>Clostridiaceae</taxon>
        <taxon>Clostridium</taxon>
    </lineage>
</organism>
<protein>
    <recommendedName>
        <fullName evidence="1">Triosephosphate isomerase</fullName>
        <shortName evidence="1">TIM</shortName>
        <shortName evidence="1">TPI</shortName>
        <ecNumber evidence="1">5.3.1.1</ecNumber>
    </recommendedName>
    <alternativeName>
        <fullName evidence="1">Triose-phosphate isomerase</fullName>
    </alternativeName>
</protein>
<feature type="chain" id="PRO_0000090212" description="Triosephosphate isomerase">
    <location>
        <begin position="1"/>
        <end position="255"/>
    </location>
</feature>
<feature type="active site" description="Electrophile" evidence="1">
    <location>
        <position position="100"/>
    </location>
</feature>
<feature type="active site" description="Proton acceptor" evidence="1">
    <location>
        <position position="172"/>
    </location>
</feature>
<feature type="binding site" evidence="1">
    <location>
        <begin position="15"/>
        <end position="17"/>
    </location>
    <ligand>
        <name>substrate</name>
    </ligand>
</feature>
<feature type="binding site" evidence="1">
    <location>
        <position position="178"/>
    </location>
    <ligand>
        <name>substrate</name>
    </ligand>
</feature>
<feature type="binding site" evidence="1">
    <location>
        <position position="218"/>
    </location>
    <ligand>
        <name>substrate</name>
    </ligand>
</feature>
<feature type="binding site" evidence="1">
    <location>
        <begin position="239"/>
        <end position="240"/>
    </location>
    <ligand>
        <name>substrate</name>
    </ligand>
</feature>
<gene>
    <name evidence="1" type="primary">tpiA</name>
    <name type="ordered locus">CTC_00380</name>
</gene>
<accession>Q898R2</accession>
<sequence>MKGVYGLRKAIIAGNWKMHNTIDESVKLVEELIPKVKEAECEVVVCPPFICLPKIREITEGTNIKVGAQNMYFEEKGAFTGEVSPLMLEKLNIDYVIIGHSERRQYFKETDQTVNKKLKAAFEHNLIPILCVGETLDEKENGVTEEVVSKQVKLGLFELKEEQVEKLVIAYEPIWAIGTGKTATSEEANEVIALIRSTVKSLYGDKVAESLRIQYGGSVKPSTIKEQMSMSDIDGALVGGASLKANDFSAIVNYK</sequence>
<comment type="function">
    <text evidence="1">Involved in the gluconeogenesis. Catalyzes stereospecifically the conversion of dihydroxyacetone phosphate (DHAP) to D-glyceraldehyde-3-phosphate (G3P).</text>
</comment>
<comment type="catalytic activity">
    <reaction evidence="1">
        <text>D-glyceraldehyde 3-phosphate = dihydroxyacetone phosphate</text>
        <dbReference type="Rhea" id="RHEA:18585"/>
        <dbReference type="ChEBI" id="CHEBI:57642"/>
        <dbReference type="ChEBI" id="CHEBI:59776"/>
        <dbReference type="EC" id="5.3.1.1"/>
    </reaction>
</comment>
<comment type="pathway">
    <text evidence="1">Carbohydrate biosynthesis; gluconeogenesis.</text>
</comment>
<comment type="pathway">
    <text evidence="1">Carbohydrate degradation; glycolysis; D-glyceraldehyde 3-phosphate from glycerone phosphate: step 1/1.</text>
</comment>
<comment type="subunit">
    <text evidence="1">Homodimer.</text>
</comment>
<comment type="subcellular location">
    <subcellularLocation>
        <location evidence="1">Cytoplasm</location>
    </subcellularLocation>
</comment>
<comment type="similarity">
    <text evidence="1">Belongs to the triosephosphate isomerase family.</text>
</comment>
<reference key="1">
    <citation type="journal article" date="2003" name="Proc. Natl. Acad. Sci. U.S.A.">
        <title>The genome sequence of Clostridium tetani, the causative agent of tetanus disease.</title>
        <authorList>
            <person name="Brueggemann H."/>
            <person name="Baeumer S."/>
            <person name="Fricke W.F."/>
            <person name="Wiezer A."/>
            <person name="Liesegang H."/>
            <person name="Decker I."/>
            <person name="Herzberg C."/>
            <person name="Martinez-Arias R."/>
            <person name="Merkl R."/>
            <person name="Henne A."/>
            <person name="Gottschalk G."/>
        </authorList>
    </citation>
    <scope>NUCLEOTIDE SEQUENCE [LARGE SCALE GENOMIC DNA]</scope>
    <source>
        <strain>Massachusetts / E88</strain>
    </source>
</reference>
<keyword id="KW-0963">Cytoplasm</keyword>
<keyword id="KW-0312">Gluconeogenesis</keyword>
<keyword id="KW-0324">Glycolysis</keyword>
<keyword id="KW-0413">Isomerase</keyword>
<keyword id="KW-1185">Reference proteome</keyword>
<evidence type="ECO:0000255" key="1">
    <source>
        <dbReference type="HAMAP-Rule" id="MF_00147"/>
    </source>
</evidence>